<dbReference type="EMBL" id="DQ091207">
    <property type="protein sequence ID" value="AAZ22680.1"/>
    <property type="molecule type" value="Genomic_DNA"/>
</dbReference>
<dbReference type="SMR" id="Q45XI4"/>
<dbReference type="GO" id="GO:0072562">
    <property type="term" value="C:blood microparticle"/>
    <property type="evidence" value="ECO:0007669"/>
    <property type="project" value="TreeGrafter"/>
</dbReference>
<dbReference type="GO" id="GO:0031838">
    <property type="term" value="C:haptoglobin-hemoglobin complex"/>
    <property type="evidence" value="ECO:0007669"/>
    <property type="project" value="TreeGrafter"/>
</dbReference>
<dbReference type="GO" id="GO:0005833">
    <property type="term" value="C:hemoglobin complex"/>
    <property type="evidence" value="ECO:0007669"/>
    <property type="project" value="InterPro"/>
</dbReference>
<dbReference type="GO" id="GO:0031720">
    <property type="term" value="F:haptoglobin binding"/>
    <property type="evidence" value="ECO:0007669"/>
    <property type="project" value="TreeGrafter"/>
</dbReference>
<dbReference type="GO" id="GO:0020037">
    <property type="term" value="F:heme binding"/>
    <property type="evidence" value="ECO:0007669"/>
    <property type="project" value="InterPro"/>
</dbReference>
<dbReference type="GO" id="GO:0031721">
    <property type="term" value="F:hemoglobin alpha binding"/>
    <property type="evidence" value="ECO:0007669"/>
    <property type="project" value="TreeGrafter"/>
</dbReference>
<dbReference type="GO" id="GO:0046872">
    <property type="term" value="F:metal ion binding"/>
    <property type="evidence" value="ECO:0007669"/>
    <property type="project" value="UniProtKB-KW"/>
</dbReference>
<dbReference type="GO" id="GO:0043177">
    <property type="term" value="F:organic acid binding"/>
    <property type="evidence" value="ECO:0007669"/>
    <property type="project" value="TreeGrafter"/>
</dbReference>
<dbReference type="GO" id="GO:0019825">
    <property type="term" value="F:oxygen binding"/>
    <property type="evidence" value="ECO:0007669"/>
    <property type="project" value="InterPro"/>
</dbReference>
<dbReference type="GO" id="GO:0005344">
    <property type="term" value="F:oxygen carrier activity"/>
    <property type="evidence" value="ECO:0007669"/>
    <property type="project" value="UniProtKB-KW"/>
</dbReference>
<dbReference type="GO" id="GO:0004601">
    <property type="term" value="F:peroxidase activity"/>
    <property type="evidence" value="ECO:0007669"/>
    <property type="project" value="TreeGrafter"/>
</dbReference>
<dbReference type="GO" id="GO:0042744">
    <property type="term" value="P:hydrogen peroxide catabolic process"/>
    <property type="evidence" value="ECO:0007669"/>
    <property type="project" value="TreeGrafter"/>
</dbReference>
<dbReference type="CDD" id="cd08925">
    <property type="entry name" value="Hb-beta-like"/>
    <property type="match status" value="1"/>
</dbReference>
<dbReference type="FunFam" id="1.10.490.10:FF:000001">
    <property type="entry name" value="Hemoglobin subunit beta"/>
    <property type="match status" value="1"/>
</dbReference>
<dbReference type="Gene3D" id="1.10.490.10">
    <property type="entry name" value="Globins"/>
    <property type="match status" value="1"/>
</dbReference>
<dbReference type="InterPro" id="IPR000971">
    <property type="entry name" value="Globin"/>
</dbReference>
<dbReference type="InterPro" id="IPR009050">
    <property type="entry name" value="Globin-like_sf"/>
</dbReference>
<dbReference type="InterPro" id="IPR012292">
    <property type="entry name" value="Globin/Proto"/>
</dbReference>
<dbReference type="InterPro" id="IPR002337">
    <property type="entry name" value="Hemoglobin_b"/>
</dbReference>
<dbReference type="InterPro" id="IPR050056">
    <property type="entry name" value="Hemoglobin_oxygen_transport"/>
</dbReference>
<dbReference type="PANTHER" id="PTHR11442">
    <property type="entry name" value="HEMOGLOBIN FAMILY MEMBER"/>
    <property type="match status" value="1"/>
</dbReference>
<dbReference type="PANTHER" id="PTHR11442:SF42">
    <property type="entry name" value="HEMOGLOBIN SUBUNIT BETA"/>
    <property type="match status" value="1"/>
</dbReference>
<dbReference type="Pfam" id="PF00042">
    <property type="entry name" value="Globin"/>
    <property type="match status" value="1"/>
</dbReference>
<dbReference type="PRINTS" id="PR00814">
    <property type="entry name" value="BETAHAEM"/>
</dbReference>
<dbReference type="SUPFAM" id="SSF46458">
    <property type="entry name" value="Globin-like"/>
    <property type="match status" value="1"/>
</dbReference>
<dbReference type="PROSITE" id="PS01033">
    <property type="entry name" value="GLOBIN"/>
    <property type="match status" value="1"/>
</dbReference>
<evidence type="ECO:0000255" key="1">
    <source>
        <dbReference type="PROSITE-ProRule" id="PRU00238"/>
    </source>
</evidence>
<gene>
    <name type="primary">HBD</name>
</gene>
<comment type="subunit">
    <text>Heterotetramer of two delta chains and two alpha chains.</text>
</comment>
<comment type="tissue specificity">
    <text>Red blood cells.</text>
</comment>
<comment type="similarity">
    <text evidence="1">Belongs to the globin family.</text>
</comment>
<keyword id="KW-0349">Heme</keyword>
<keyword id="KW-0408">Iron</keyword>
<keyword id="KW-0479">Metal-binding</keyword>
<keyword id="KW-0561">Oxygen transport</keyword>
<keyword id="KW-0813">Transport</keyword>
<accession>Q45XI4</accession>
<sequence>MVRLTDSEKAEVVSLWSKVDEKIIGSEALGRLLVIYPWTQRFFEHFGDLSTADAIMKNPRVQAHGEKVLSSFGEGLNHLGDLKGTFAQLSELHCDELHVDPENFKLLGNILVVVLARHYGKEFTLEVQAAYQKFVAGMANALAHKYH</sequence>
<reference key="1">
    <citation type="submission" date="2005-06" db="EMBL/GenBank/DDBJ databases">
        <title>Atypical molecular evolution of afrotherian and xenarthran beta-globin cluster genes.</title>
        <authorList>
            <person name="Sloan A.M."/>
            <person name="Campbell K.L."/>
        </authorList>
    </citation>
    <scope>NUCLEOTIDE SEQUENCE [GENOMIC DNA]</scope>
</reference>
<proteinExistence type="evidence at transcript level"/>
<organism>
    <name type="scientific">Dendrohyrax dorsalis</name>
    <name type="common">Beecroft's tree hyrax</name>
    <dbReference type="NCBI Taxonomy" id="42325"/>
    <lineage>
        <taxon>Eukaryota</taxon>
        <taxon>Metazoa</taxon>
        <taxon>Chordata</taxon>
        <taxon>Craniata</taxon>
        <taxon>Vertebrata</taxon>
        <taxon>Euteleostomi</taxon>
        <taxon>Mammalia</taxon>
        <taxon>Eutheria</taxon>
        <taxon>Afrotheria</taxon>
        <taxon>Hyracoidea</taxon>
        <taxon>Procaviidae</taxon>
        <taxon>Dendrohyrax</taxon>
    </lineage>
</organism>
<feature type="chain" id="PRO_0000053175" description="Hemoglobin subunit deltaH">
    <location>
        <begin position="1"/>
        <end position="147"/>
    </location>
</feature>
<feature type="domain" description="Globin" evidence="1">
    <location>
        <begin position="3"/>
        <end position="147"/>
    </location>
</feature>
<feature type="binding site" description="distal binding residue">
    <location>
        <position position="64"/>
    </location>
    <ligand>
        <name>heme b</name>
        <dbReference type="ChEBI" id="CHEBI:60344"/>
    </ligand>
    <ligandPart>
        <name>Fe</name>
        <dbReference type="ChEBI" id="CHEBI:18248"/>
    </ligandPart>
</feature>
<feature type="binding site" description="proximal binding residue">
    <location>
        <position position="93"/>
    </location>
    <ligand>
        <name>heme b</name>
        <dbReference type="ChEBI" id="CHEBI:60344"/>
    </ligand>
    <ligandPart>
        <name>Fe</name>
        <dbReference type="ChEBI" id="CHEBI:18248"/>
    </ligandPart>
</feature>
<protein>
    <recommendedName>
        <fullName>Hemoglobin subunit deltaH</fullName>
    </recommendedName>
    <alternativeName>
        <fullName>DeltaH-globin</fullName>
    </alternativeName>
    <alternativeName>
        <fullName>Hemoglobin deltaH chain</fullName>
    </alternativeName>
</protein>
<name>HBD_DENDR</name>